<gene>
    <name evidence="1" type="primary">rfcL</name>
    <name type="ordered locus">Smar_1224</name>
</gene>
<sequence length="423" mass="48805">MPRRIPWIIKYRPKKIADVVNQDSAKKQFIQWLESWLKGKPSKKAALLYGPAGCGKTSLVEAAANEYGLEIVEMNASDFRRRQDIERIAKTAAFMRSLFARGKIILLDEVDGISGTADRGAIDAILHLLEITRYPVVMTANNPWDQKLKPLRDASLMIAFKRLSERDVIIVLKRICQLEKLECEDAALREIARRSEGDLRSAINDLQAIAEGFGRVTLNWVRELSAYRTREYAPFEALQKMFNARYIFQAKSAISQANIDYETMMIWINEHIPTYYDDPEEIWRAYEALSRADVYMGRIRKSGSWDLLSYVFDMMGPGVAFARKIYRYKWKAFRSPKRLQLLAQTKRSREVREGIAMTLAPRLLTSRATIKRDVIPFLKIIFTHAPKYAAKIALGYGLTEEMIKWLAGPKSSEVLAYYRRLKR</sequence>
<dbReference type="EMBL" id="CP000575">
    <property type="protein sequence ID" value="ABN70318.1"/>
    <property type="molecule type" value="Genomic_DNA"/>
</dbReference>
<dbReference type="RefSeq" id="WP_011839509.1">
    <property type="nucleotide sequence ID" value="NC_009033.1"/>
</dbReference>
<dbReference type="SMR" id="A3DNV8"/>
<dbReference type="STRING" id="399550.Smar_1224"/>
<dbReference type="GeneID" id="4906576"/>
<dbReference type="KEGG" id="smr:Smar_1224"/>
<dbReference type="eggNOG" id="arCOG00470">
    <property type="taxonomic scope" value="Archaea"/>
</dbReference>
<dbReference type="HOGENOM" id="CLU_027255_1_1_2"/>
<dbReference type="OrthoDB" id="8658at2157"/>
<dbReference type="Proteomes" id="UP000000254">
    <property type="component" value="Chromosome"/>
</dbReference>
<dbReference type="GO" id="GO:0005524">
    <property type="term" value="F:ATP binding"/>
    <property type="evidence" value="ECO:0007669"/>
    <property type="project" value="UniProtKB-UniRule"/>
</dbReference>
<dbReference type="GO" id="GO:0016887">
    <property type="term" value="F:ATP hydrolysis activity"/>
    <property type="evidence" value="ECO:0007669"/>
    <property type="project" value="InterPro"/>
</dbReference>
<dbReference type="GO" id="GO:0003689">
    <property type="term" value="F:DNA clamp loader activity"/>
    <property type="evidence" value="ECO:0007669"/>
    <property type="project" value="UniProtKB-UniRule"/>
</dbReference>
<dbReference type="GO" id="GO:0006260">
    <property type="term" value="P:DNA replication"/>
    <property type="evidence" value="ECO:0007669"/>
    <property type="project" value="UniProtKB-UniRule"/>
</dbReference>
<dbReference type="CDD" id="cd00009">
    <property type="entry name" value="AAA"/>
    <property type="match status" value="1"/>
</dbReference>
<dbReference type="CDD" id="cd18140">
    <property type="entry name" value="HLD_clamp_RFC"/>
    <property type="match status" value="1"/>
</dbReference>
<dbReference type="Gene3D" id="1.10.8.60">
    <property type="match status" value="1"/>
</dbReference>
<dbReference type="Gene3D" id="3.40.50.300">
    <property type="entry name" value="P-loop containing nucleotide triphosphate hydrolases"/>
    <property type="match status" value="1"/>
</dbReference>
<dbReference type="HAMAP" id="MF_01508">
    <property type="entry name" value="RfcL"/>
    <property type="match status" value="1"/>
</dbReference>
<dbReference type="InterPro" id="IPR003593">
    <property type="entry name" value="AAA+_ATPase"/>
</dbReference>
<dbReference type="InterPro" id="IPR003959">
    <property type="entry name" value="ATPase_AAA_core"/>
</dbReference>
<dbReference type="InterPro" id="IPR027417">
    <property type="entry name" value="P-loop_NTPase"/>
</dbReference>
<dbReference type="InterPro" id="IPR023935">
    <property type="entry name" value="Rep_factor-C_lsu"/>
</dbReference>
<dbReference type="InterPro" id="IPR047854">
    <property type="entry name" value="RFC_lid"/>
</dbReference>
<dbReference type="NCBIfam" id="NF003229">
    <property type="entry name" value="PRK04195.1-5"/>
    <property type="match status" value="1"/>
</dbReference>
<dbReference type="PANTHER" id="PTHR23389">
    <property type="entry name" value="CHROMOSOME TRANSMISSION FIDELITY FACTOR 18"/>
    <property type="match status" value="1"/>
</dbReference>
<dbReference type="PANTHER" id="PTHR23389:SF6">
    <property type="entry name" value="REPLICATION FACTOR C SUBUNIT 1"/>
    <property type="match status" value="1"/>
</dbReference>
<dbReference type="Pfam" id="PF00004">
    <property type="entry name" value="AAA"/>
    <property type="match status" value="1"/>
</dbReference>
<dbReference type="Pfam" id="PF21960">
    <property type="entry name" value="RCF1-5-like_lid"/>
    <property type="match status" value="1"/>
</dbReference>
<dbReference type="SMART" id="SM00382">
    <property type="entry name" value="AAA"/>
    <property type="match status" value="1"/>
</dbReference>
<dbReference type="SUPFAM" id="SSF52540">
    <property type="entry name" value="P-loop containing nucleoside triphosphate hydrolases"/>
    <property type="match status" value="1"/>
</dbReference>
<organism>
    <name type="scientific">Staphylothermus marinus (strain ATCC 43588 / DSM 3639 / JCM 9404 / F1)</name>
    <dbReference type="NCBI Taxonomy" id="399550"/>
    <lineage>
        <taxon>Archaea</taxon>
        <taxon>Thermoproteota</taxon>
        <taxon>Thermoprotei</taxon>
        <taxon>Desulfurococcales</taxon>
        <taxon>Desulfurococcaceae</taxon>
        <taxon>Staphylothermus</taxon>
    </lineage>
</organism>
<name>RFCL_STAMF</name>
<keyword id="KW-0067">ATP-binding</keyword>
<keyword id="KW-0235">DNA replication</keyword>
<keyword id="KW-0547">Nucleotide-binding</keyword>
<keyword id="KW-1185">Reference proteome</keyword>
<protein>
    <recommendedName>
        <fullName evidence="1">Replication factor C large subunit</fullName>
        <shortName evidence="1">RFC large subunit</shortName>
    </recommendedName>
    <alternativeName>
        <fullName evidence="1">Clamp loader large subunit</fullName>
    </alternativeName>
</protein>
<evidence type="ECO:0000255" key="1">
    <source>
        <dbReference type="HAMAP-Rule" id="MF_01508"/>
    </source>
</evidence>
<feature type="chain" id="PRO_0000300157" description="Replication factor C large subunit">
    <location>
        <begin position="1"/>
        <end position="423"/>
    </location>
</feature>
<feature type="binding site" evidence="1">
    <location>
        <begin position="50"/>
        <end position="57"/>
    </location>
    <ligand>
        <name>ATP</name>
        <dbReference type="ChEBI" id="CHEBI:30616"/>
    </ligand>
</feature>
<comment type="function">
    <text evidence="1">Part of the RFC clamp loader complex which loads the PCNA sliding clamp onto DNA.</text>
</comment>
<comment type="subunit">
    <text evidence="1">Heteromultimer composed of small subunits (RfcS) and large subunits (RfcL).</text>
</comment>
<comment type="similarity">
    <text evidence="1">Belongs to the activator 1 small subunits family. RfcL subfamily.</text>
</comment>
<accession>A3DNV8</accession>
<reference key="1">
    <citation type="journal article" date="2009" name="BMC Genomics">
        <title>The complete genome sequence of Staphylothermus marinus reveals differences in sulfur metabolism among heterotrophic Crenarchaeota.</title>
        <authorList>
            <person name="Anderson I.J."/>
            <person name="Dharmarajan L."/>
            <person name="Rodriguez J."/>
            <person name="Hooper S."/>
            <person name="Porat I."/>
            <person name="Ulrich L.E."/>
            <person name="Elkins J.G."/>
            <person name="Mavromatis K."/>
            <person name="Sun H."/>
            <person name="Land M."/>
            <person name="Lapidus A."/>
            <person name="Lucas S."/>
            <person name="Barry K."/>
            <person name="Huber H."/>
            <person name="Zhulin I.B."/>
            <person name="Whitman W.B."/>
            <person name="Mukhopadhyay B."/>
            <person name="Woese C."/>
            <person name="Bristow J."/>
            <person name="Kyrpides N."/>
        </authorList>
    </citation>
    <scope>NUCLEOTIDE SEQUENCE [LARGE SCALE GENOMIC DNA]</scope>
    <source>
        <strain>ATCC 43588 / DSM 3639 / JCM 9404 / F1</strain>
    </source>
</reference>
<reference key="2">
    <citation type="journal article" date="2009" name="Stand. Genomic Sci.">
        <title>Complete genome sequence of Staphylothermus marinus Stetter and Fiala 1986 type strain F1.</title>
        <authorList>
            <person name="Anderson I.J."/>
            <person name="Sun H."/>
            <person name="Lapidus A."/>
            <person name="Copeland A."/>
            <person name="Glavina Del Rio T."/>
            <person name="Tice H."/>
            <person name="Dalin E."/>
            <person name="Lucas S."/>
            <person name="Barry K."/>
            <person name="Land M."/>
            <person name="Richardson P."/>
            <person name="Huber H."/>
            <person name="Kyrpides N.C."/>
        </authorList>
    </citation>
    <scope>NUCLEOTIDE SEQUENCE [LARGE SCALE GENOMIC DNA]</scope>
    <source>
        <strain>ATCC 43588 / DSM 3639 / JCM 9404 / F1</strain>
    </source>
</reference>
<proteinExistence type="inferred from homology"/>